<name>ENO_MYCA9</name>
<comment type="function">
    <text evidence="1">Catalyzes the reversible conversion of 2-phosphoglycerate (2-PG) into phosphoenolpyruvate (PEP). It is essential for the degradation of carbohydrates via glycolysis.</text>
</comment>
<comment type="catalytic activity">
    <reaction evidence="1">
        <text>(2R)-2-phosphoglycerate = phosphoenolpyruvate + H2O</text>
        <dbReference type="Rhea" id="RHEA:10164"/>
        <dbReference type="ChEBI" id="CHEBI:15377"/>
        <dbReference type="ChEBI" id="CHEBI:58289"/>
        <dbReference type="ChEBI" id="CHEBI:58702"/>
        <dbReference type="EC" id="4.2.1.11"/>
    </reaction>
</comment>
<comment type="cofactor">
    <cofactor evidence="1">
        <name>Mg(2+)</name>
        <dbReference type="ChEBI" id="CHEBI:18420"/>
    </cofactor>
    <text evidence="1">Binds a second Mg(2+) ion via substrate during catalysis.</text>
</comment>
<comment type="pathway">
    <text evidence="1">Carbohydrate degradation; glycolysis; pyruvate from D-glyceraldehyde 3-phosphate: step 4/5.</text>
</comment>
<comment type="subcellular location">
    <subcellularLocation>
        <location evidence="1">Cytoplasm</location>
    </subcellularLocation>
    <subcellularLocation>
        <location evidence="1">Secreted</location>
    </subcellularLocation>
    <subcellularLocation>
        <location evidence="1">Cell surface</location>
    </subcellularLocation>
    <text evidence="1">Fractions of enolase are present in both the cytoplasm and on the cell surface.</text>
</comment>
<comment type="similarity">
    <text evidence="1">Belongs to the enolase family.</text>
</comment>
<sequence>MPILEQVGAREILDSRGNPTVEVEVALTDGTFARAAVPSGASTGEHEAVELRDGDARYGGKGVTKAVNAVLDEIAPAIIGESADDQRLIDQALLDLDGTPDKSRLGANAILGVSLAVAKAAADSAGLALFRYLGGPNAHILPVPMMNILNGGAHADTGVDVQEFMVAPIGAPSFKESLRWGTEVYHSLKSVLKKQGLSTGLGDEGGFAPDVAGTRAALDLISTAIEATGLKLGADVALALDVAATEFYSAADGYSFEKEKRTAEQMGAFYAELLDAYPLVSIEDPLSEDDWDGWVALTTAIGDRVQLVGDDLFVTNPERLEEGIERGAANALLVKVNQIGTLTETLDAVTLAHSSGYKTMMSHRSGETEDTTIADLAVAVGSGQIKTGAPARSERVAKYNQLLRIEETLGDAARFAGDLAFPRFSIEPAN</sequence>
<reference key="1">
    <citation type="journal article" date="2009" name="PLoS ONE">
        <title>Non mycobacterial virulence genes in the genome of the emerging pathogen Mycobacterium abscessus.</title>
        <authorList>
            <person name="Ripoll F."/>
            <person name="Pasek S."/>
            <person name="Schenowitz C."/>
            <person name="Dossat C."/>
            <person name="Barbe V."/>
            <person name="Rottman M."/>
            <person name="Macheras E."/>
            <person name="Heym B."/>
            <person name="Herrmann J.L."/>
            <person name="Daffe M."/>
            <person name="Brosch R."/>
            <person name="Risler J.L."/>
            <person name="Gaillard J.L."/>
        </authorList>
    </citation>
    <scope>NUCLEOTIDE SEQUENCE [LARGE SCALE GENOMIC DNA]</scope>
    <source>
        <strain>ATCC 19977 / DSM 44196 / CCUG 20993 / CIP 104536 / JCM 13569 / NCTC 13031 / TMC 1543 / L948</strain>
    </source>
</reference>
<feature type="chain" id="PRO_1000115887" description="Enolase">
    <location>
        <begin position="1"/>
        <end position="430"/>
    </location>
</feature>
<feature type="active site" description="Proton donor" evidence="1">
    <location>
        <position position="204"/>
    </location>
</feature>
<feature type="active site" description="Proton acceptor" evidence="1">
    <location>
        <position position="335"/>
    </location>
</feature>
<feature type="binding site" evidence="1">
    <location>
        <position position="162"/>
    </location>
    <ligand>
        <name>(2R)-2-phosphoglycerate</name>
        <dbReference type="ChEBI" id="CHEBI:58289"/>
    </ligand>
</feature>
<feature type="binding site" evidence="1">
    <location>
        <position position="241"/>
    </location>
    <ligand>
        <name>Mg(2+)</name>
        <dbReference type="ChEBI" id="CHEBI:18420"/>
    </ligand>
</feature>
<feature type="binding site" evidence="1">
    <location>
        <position position="283"/>
    </location>
    <ligand>
        <name>Mg(2+)</name>
        <dbReference type="ChEBI" id="CHEBI:18420"/>
    </ligand>
</feature>
<feature type="binding site" evidence="1">
    <location>
        <position position="310"/>
    </location>
    <ligand>
        <name>Mg(2+)</name>
        <dbReference type="ChEBI" id="CHEBI:18420"/>
    </ligand>
</feature>
<feature type="binding site" evidence="1">
    <location>
        <position position="335"/>
    </location>
    <ligand>
        <name>(2R)-2-phosphoglycerate</name>
        <dbReference type="ChEBI" id="CHEBI:58289"/>
    </ligand>
</feature>
<feature type="binding site" evidence="1">
    <location>
        <position position="364"/>
    </location>
    <ligand>
        <name>(2R)-2-phosphoglycerate</name>
        <dbReference type="ChEBI" id="CHEBI:58289"/>
    </ligand>
</feature>
<feature type="binding site" evidence="1">
    <location>
        <position position="365"/>
    </location>
    <ligand>
        <name>(2R)-2-phosphoglycerate</name>
        <dbReference type="ChEBI" id="CHEBI:58289"/>
    </ligand>
</feature>
<feature type="binding site" evidence="1">
    <location>
        <position position="386"/>
    </location>
    <ligand>
        <name>(2R)-2-phosphoglycerate</name>
        <dbReference type="ChEBI" id="CHEBI:58289"/>
    </ligand>
</feature>
<dbReference type="EC" id="4.2.1.11" evidence="1"/>
<dbReference type="EMBL" id="CU458896">
    <property type="protein sequence ID" value="CAM61253.1"/>
    <property type="molecule type" value="Genomic_DNA"/>
</dbReference>
<dbReference type="RefSeq" id="WP_005084206.1">
    <property type="nucleotide sequence ID" value="NZ_MLCG01000004.1"/>
</dbReference>
<dbReference type="SMR" id="B1MKG1"/>
<dbReference type="GeneID" id="93378114"/>
<dbReference type="KEGG" id="mab:MAB_1165"/>
<dbReference type="UniPathway" id="UPA00109">
    <property type="reaction ID" value="UER00187"/>
</dbReference>
<dbReference type="Proteomes" id="UP000007137">
    <property type="component" value="Chromosome"/>
</dbReference>
<dbReference type="GO" id="GO:0009986">
    <property type="term" value="C:cell surface"/>
    <property type="evidence" value="ECO:0007669"/>
    <property type="project" value="UniProtKB-SubCell"/>
</dbReference>
<dbReference type="GO" id="GO:0005576">
    <property type="term" value="C:extracellular region"/>
    <property type="evidence" value="ECO:0007669"/>
    <property type="project" value="UniProtKB-SubCell"/>
</dbReference>
<dbReference type="GO" id="GO:0000015">
    <property type="term" value="C:phosphopyruvate hydratase complex"/>
    <property type="evidence" value="ECO:0007669"/>
    <property type="project" value="InterPro"/>
</dbReference>
<dbReference type="GO" id="GO:0000287">
    <property type="term" value="F:magnesium ion binding"/>
    <property type="evidence" value="ECO:0007669"/>
    <property type="project" value="UniProtKB-UniRule"/>
</dbReference>
<dbReference type="GO" id="GO:0004634">
    <property type="term" value="F:phosphopyruvate hydratase activity"/>
    <property type="evidence" value="ECO:0007669"/>
    <property type="project" value="UniProtKB-UniRule"/>
</dbReference>
<dbReference type="GO" id="GO:0006096">
    <property type="term" value="P:glycolytic process"/>
    <property type="evidence" value="ECO:0007669"/>
    <property type="project" value="UniProtKB-UniRule"/>
</dbReference>
<dbReference type="CDD" id="cd03313">
    <property type="entry name" value="enolase"/>
    <property type="match status" value="1"/>
</dbReference>
<dbReference type="FunFam" id="3.20.20.120:FF:000001">
    <property type="entry name" value="Enolase"/>
    <property type="match status" value="1"/>
</dbReference>
<dbReference type="FunFam" id="3.30.390.10:FF:000001">
    <property type="entry name" value="Enolase"/>
    <property type="match status" value="1"/>
</dbReference>
<dbReference type="Gene3D" id="3.20.20.120">
    <property type="entry name" value="Enolase-like C-terminal domain"/>
    <property type="match status" value="1"/>
</dbReference>
<dbReference type="Gene3D" id="3.30.390.10">
    <property type="entry name" value="Enolase-like, N-terminal domain"/>
    <property type="match status" value="1"/>
</dbReference>
<dbReference type="HAMAP" id="MF_00318">
    <property type="entry name" value="Enolase"/>
    <property type="match status" value="1"/>
</dbReference>
<dbReference type="InterPro" id="IPR000941">
    <property type="entry name" value="Enolase"/>
</dbReference>
<dbReference type="InterPro" id="IPR036849">
    <property type="entry name" value="Enolase-like_C_sf"/>
</dbReference>
<dbReference type="InterPro" id="IPR029017">
    <property type="entry name" value="Enolase-like_N"/>
</dbReference>
<dbReference type="InterPro" id="IPR020810">
    <property type="entry name" value="Enolase_C"/>
</dbReference>
<dbReference type="InterPro" id="IPR020809">
    <property type="entry name" value="Enolase_CS"/>
</dbReference>
<dbReference type="InterPro" id="IPR020811">
    <property type="entry name" value="Enolase_N"/>
</dbReference>
<dbReference type="NCBIfam" id="TIGR01060">
    <property type="entry name" value="eno"/>
    <property type="match status" value="1"/>
</dbReference>
<dbReference type="PANTHER" id="PTHR11902">
    <property type="entry name" value="ENOLASE"/>
    <property type="match status" value="1"/>
</dbReference>
<dbReference type="PANTHER" id="PTHR11902:SF1">
    <property type="entry name" value="ENOLASE"/>
    <property type="match status" value="1"/>
</dbReference>
<dbReference type="Pfam" id="PF00113">
    <property type="entry name" value="Enolase_C"/>
    <property type="match status" value="1"/>
</dbReference>
<dbReference type="Pfam" id="PF03952">
    <property type="entry name" value="Enolase_N"/>
    <property type="match status" value="1"/>
</dbReference>
<dbReference type="PIRSF" id="PIRSF001400">
    <property type="entry name" value="Enolase"/>
    <property type="match status" value="1"/>
</dbReference>
<dbReference type="PRINTS" id="PR00148">
    <property type="entry name" value="ENOLASE"/>
</dbReference>
<dbReference type="SFLD" id="SFLDF00002">
    <property type="entry name" value="enolase"/>
    <property type="match status" value="1"/>
</dbReference>
<dbReference type="SFLD" id="SFLDG00178">
    <property type="entry name" value="enolase"/>
    <property type="match status" value="1"/>
</dbReference>
<dbReference type="SMART" id="SM01192">
    <property type="entry name" value="Enolase_C"/>
    <property type="match status" value="1"/>
</dbReference>
<dbReference type="SMART" id="SM01193">
    <property type="entry name" value="Enolase_N"/>
    <property type="match status" value="1"/>
</dbReference>
<dbReference type="SUPFAM" id="SSF51604">
    <property type="entry name" value="Enolase C-terminal domain-like"/>
    <property type="match status" value="1"/>
</dbReference>
<dbReference type="SUPFAM" id="SSF54826">
    <property type="entry name" value="Enolase N-terminal domain-like"/>
    <property type="match status" value="1"/>
</dbReference>
<dbReference type="PROSITE" id="PS00164">
    <property type="entry name" value="ENOLASE"/>
    <property type="match status" value="1"/>
</dbReference>
<organism>
    <name type="scientific">Mycobacteroides abscessus (strain ATCC 19977 / DSM 44196 / CCUG 20993 / CIP 104536 / JCM 13569 / NCTC 13031 / TMC 1543 / L948)</name>
    <name type="common">Mycobacterium abscessus</name>
    <dbReference type="NCBI Taxonomy" id="561007"/>
    <lineage>
        <taxon>Bacteria</taxon>
        <taxon>Bacillati</taxon>
        <taxon>Actinomycetota</taxon>
        <taxon>Actinomycetes</taxon>
        <taxon>Mycobacteriales</taxon>
        <taxon>Mycobacteriaceae</taxon>
        <taxon>Mycobacteroides</taxon>
        <taxon>Mycobacteroides abscessus</taxon>
    </lineage>
</organism>
<keyword id="KW-0963">Cytoplasm</keyword>
<keyword id="KW-0324">Glycolysis</keyword>
<keyword id="KW-0456">Lyase</keyword>
<keyword id="KW-0460">Magnesium</keyword>
<keyword id="KW-0479">Metal-binding</keyword>
<keyword id="KW-1185">Reference proteome</keyword>
<keyword id="KW-0964">Secreted</keyword>
<accession>B1MKG1</accession>
<evidence type="ECO:0000255" key="1">
    <source>
        <dbReference type="HAMAP-Rule" id="MF_00318"/>
    </source>
</evidence>
<gene>
    <name evidence="1" type="primary">eno</name>
    <name type="ordered locus">MAB_1165</name>
</gene>
<protein>
    <recommendedName>
        <fullName evidence="1">Enolase</fullName>
        <ecNumber evidence="1">4.2.1.11</ecNumber>
    </recommendedName>
    <alternativeName>
        <fullName evidence="1">2-phospho-D-glycerate hydro-lyase</fullName>
    </alternativeName>
    <alternativeName>
        <fullName evidence="1">2-phosphoglycerate dehydratase</fullName>
    </alternativeName>
</protein>
<proteinExistence type="inferred from homology"/>